<name>CB28_CONMR</name>
<evidence type="ECO:0000255" key="1"/>
<evidence type="ECO:0000269" key="2">
    <source>
    </source>
</evidence>
<evidence type="ECO:0000303" key="3">
    <source>
    </source>
</evidence>
<evidence type="ECO:0000305" key="4"/>
<evidence type="ECO:0000305" key="5">
    <source>
    </source>
</evidence>
<sequence length="77" mass="8845">MLRLITAAVLVSACLAYPQKKRTPPQTRPTSRALVSQCRPCPTCRECKCRECKCRECQCRIHSCLSAWDSRGIWMRT</sequence>
<keyword id="KW-1015">Disulfide bond</keyword>
<keyword id="KW-0964">Secreted</keyword>
<keyword id="KW-0732">Signal</keyword>
<keyword id="KW-0800">Toxin</keyword>
<proteinExistence type="evidence at protein level"/>
<dbReference type="GO" id="GO:0005576">
    <property type="term" value="C:extracellular region"/>
    <property type="evidence" value="ECO:0007669"/>
    <property type="project" value="UniProtKB-SubCell"/>
</dbReference>
<dbReference type="GO" id="GO:0090729">
    <property type="term" value="F:toxin activity"/>
    <property type="evidence" value="ECO:0007669"/>
    <property type="project" value="UniProtKB-KW"/>
</dbReference>
<reference key="1">
    <citation type="journal article" date="2013" name="Mol. Cell. Proteomics">
        <title>Deep venomics reveals the mechanism for expanded peptide diversity in cone snail venom.</title>
        <authorList>
            <person name="Dutertre S."/>
            <person name="Jin A.H."/>
            <person name="Kaas Q."/>
            <person name="Jones A."/>
            <person name="Alewood P.F."/>
            <person name="Lewis R.J."/>
        </authorList>
    </citation>
    <scope>NUCLEOTIDE SEQUENCE [MRNA]</scope>
    <scope>IDENTIFICATION BY MASS SPECTROMETRY</scope>
    <scope>SUBCELLULAR LOCATION</scope>
    <source>
        <tissue>Venom</tissue>
        <tissue>Venom duct</tissue>
    </source>
</reference>
<protein>
    <recommendedName>
        <fullName evidence="4">Conotoxin Mr8.2</fullName>
    </recommendedName>
    <alternativeName>
        <fullName evidence="3">Mr096</fullName>
    </alternativeName>
</protein>
<accession>P0DPG6</accession>
<feature type="signal peptide" evidence="1">
    <location>
        <begin position="1"/>
        <end position="16"/>
    </location>
</feature>
<feature type="propeptide" id="PRO_0000444201" evidence="4">
    <location>
        <begin position="17"/>
        <end position="32"/>
    </location>
</feature>
<feature type="chain" id="PRO_0000444202" description="Conotoxin Mr8.2" evidence="5">
    <location>
        <begin position="33"/>
        <end position="77"/>
    </location>
</feature>
<organism>
    <name type="scientific">Conus marmoreus</name>
    <name type="common">Marble cone</name>
    <dbReference type="NCBI Taxonomy" id="42752"/>
    <lineage>
        <taxon>Eukaryota</taxon>
        <taxon>Metazoa</taxon>
        <taxon>Spiralia</taxon>
        <taxon>Lophotrochozoa</taxon>
        <taxon>Mollusca</taxon>
        <taxon>Gastropoda</taxon>
        <taxon>Caenogastropoda</taxon>
        <taxon>Neogastropoda</taxon>
        <taxon>Conoidea</taxon>
        <taxon>Conidae</taxon>
        <taxon>Conus</taxon>
    </lineage>
</organism>
<comment type="subcellular location">
    <subcellularLocation>
        <location evidence="2">Secreted</location>
    </subcellularLocation>
</comment>
<comment type="tissue specificity">
    <text evidence="5">Expressed by the venom duct.</text>
</comment>
<comment type="domain">
    <text evidence="4">The cysteine framework is VIII (C-C-C-C-C-C-C-C-C-C).</text>
</comment>
<comment type="PTM">
    <text evidence="4">Contains 5 disulfide bonds.</text>
</comment>
<comment type="miscellaneous">
    <text evidence="4">The gene superfamily associated with this precursor was described as 'B superfamily' in PubMed:23152539, but this name was already assigned to the conantokin precursors, therefore the superfamily was renamed 'B2 superfamily'.</text>
</comment>
<comment type="similarity">
    <text evidence="4">Belongs to the conotoxin B2 family.</text>
</comment>